<protein>
    <recommendedName>
        <fullName>Probable E3 ubiquitin ligase complex SCF subunit scon-2</fullName>
    </recommendedName>
    <alternativeName>
        <fullName>Sulfur controller 2</fullName>
        <shortName>SCON2</shortName>
    </alternativeName>
    <alternativeName>
        <fullName>Sulfur metabolite repression control protein 2</fullName>
    </alternativeName>
</protein>
<sequence>MSSVLMSKTVTPFLREHIPSIYAPIGKPGNQETARAENPNSKYCYRHHPDSKCRRAADKAKMVMIQSELDKLTSADQQAVTHVWSLFSAAPARHRDLMLQGILSQLCFPQLSFVSREVNEALKIDFISALPVELAQKVLCYLDTVSLTKAAQVSQRWRTLADSDAVWVRMCEQHVNRKCTKCGWGLPLLERKKLRNYTRQRQLAKGGPQGRVTELADSHDSQDRSVNQHGKRPAAEAEEEDPIKKRQCMAAAEASKAVTQPKTRSWKAVYRDRWQVSYNWKNSRYKLSVLKGHENGVTCLQLDDNILATGSYDTTIKIWNIETEECIRTLVGHTAGIRALQFDDSKLISGSLDHTIKVWNWHTGECLSTFAAHTDSVISVHFDGHLLASGSSDKTVKIFDFNSKETYCLKGHSDWVNSTHVDIKSRTVFSASDDTTIKLWDLDTRQVIRTYEGHVGHVQQVLILPPEYEPDEEVLNGASQDNQDAMSVSSGGSGSPSMSHAQIERAGSPGSHSSSHNLLPSSLPSGDEDVRHLYGSAFVADESRPLPPRYFMTGGLDSTMRLWDSATGRCLRTLFGHLEGVWSLAGDTIRVISGANDGMVKTWEPRSGKCDATYTGHCGPVTCVGLSDSLMASGSEDGTIRLHSFKPCRQ</sequence>
<comment type="function">
    <text evidence="5">Component of the SCF(scon-2) E3 ubiquitin ligase complex involved in the regulation of sulfur metabolite repression, probably by mediating the inactivation or degradation of the metR transcription factor.</text>
</comment>
<comment type="pathway">
    <text>Protein modification; protein ubiquitination.</text>
</comment>
<comment type="subunit">
    <text evidence="1">Component of the SCF(scon-2) E3 ubiquitin ligase complex.</text>
</comment>
<comment type="induction">
    <text evidence="4">Expressed only under low-sulfur conditions and expression is under the control of the cys-3 transcriptional activator.</text>
</comment>
<comment type="similarity">
    <text evidence="6">Belongs to the WD repeat MET30/SCONB/SCON-2 family.</text>
</comment>
<comment type="sequence caution" evidence="6">
    <conflict type="erroneous initiation">
        <sequence resource="EMBL-CDS" id="EAA33589"/>
    </conflict>
    <text>Extended N-terminus.</text>
</comment>
<reference key="1">
    <citation type="journal article" date="1995" name="Proc. Natl. Acad. Sci. U.S.A.">
        <title>The sulfur controller-2 negative regulatory gene of Neurospora crassa encodes a protein with beta-transducin repeats.</title>
        <authorList>
            <person name="Kumar A."/>
            <person name="Paietta J.V."/>
        </authorList>
    </citation>
    <scope>NUCLEOTIDE SEQUENCE [GENOMIC DNA]</scope>
    <scope>INDUCTION</scope>
    <source>
        <strain>ATCC 24698 / 74-OR23-1A / CBS 708.71 / DSM 1257 / FGSC 987</strain>
    </source>
</reference>
<reference key="2">
    <citation type="journal article" date="2003" name="Nucleic Acids Res.">
        <title>What's in the genome of a filamentous fungus? Analysis of the Neurospora genome sequence.</title>
        <authorList>
            <person name="Mannhaupt G."/>
            <person name="Montrone C."/>
            <person name="Haase D."/>
            <person name="Mewes H.-W."/>
            <person name="Aign V."/>
            <person name="Hoheisel J.D."/>
            <person name="Fartmann B."/>
            <person name="Nyakatura G."/>
            <person name="Kempken F."/>
            <person name="Maier J."/>
            <person name="Schulte U."/>
        </authorList>
    </citation>
    <scope>NUCLEOTIDE SEQUENCE [LARGE SCALE GENOMIC DNA]</scope>
    <source>
        <strain>ATCC 24698 / 74-OR23-1A / CBS 708.71 / DSM 1257 / FGSC 987</strain>
    </source>
</reference>
<reference key="3">
    <citation type="journal article" date="2003" name="Nature">
        <title>The genome sequence of the filamentous fungus Neurospora crassa.</title>
        <authorList>
            <person name="Galagan J.E."/>
            <person name="Calvo S.E."/>
            <person name="Borkovich K.A."/>
            <person name="Selker E.U."/>
            <person name="Read N.D."/>
            <person name="Jaffe D.B."/>
            <person name="FitzHugh W."/>
            <person name="Ma L.-J."/>
            <person name="Smirnov S."/>
            <person name="Purcell S."/>
            <person name="Rehman B."/>
            <person name="Elkins T."/>
            <person name="Engels R."/>
            <person name="Wang S."/>
            <person name="Nielsen C.B."/>
            <person name="Butler J."/>
            <person name="Endrizzi M."/>
            <person name="Qui D."/>
            <person name="Ianakiev P."/>
            <person name="Bell-Pedersen D."/>
            <person name="Nelson M.A."/>
            <person name="Werner-Washburne M."/>
            <person name="Selitrennikoff C.P."/>
            <person name="Kinsey J.A."/>
            <person name="Braun E.L."/>
            <person name="Zelter A."/>
            <person name="Schulte U."/>
            <person name="Kothe G.O."/>
            <person name="Jedd G."/>
            <person name="Mewes H.-W."/>
            <person name="Staben C."/>
            <person name="Marcotte E."/>
            <person name="Greenberg D."/>
            <person name="Roy A."/>
            <person name="Foley K."/>
            <person name="Naylor J."/>
            <person name="Stange-Thomann N."/>
            <person name="Barrett R."/>
            <person name="Gnerre S."/>
            <person name="Kamal M."/>
            <person name="Kamvysselis M."/>
            <person name="Mauceli E.W."/>
            <person name="Bielke C."/>
            <person name="Rudd S."/>
            <person name="Frishman D."/>
            <person name="Krystofova S."/>
            <person name="Rasmussen C."/>
            <person name="Metzenberg R.L."/>
            <person name="Perkins D.D."/>
            <person name="Kroken S."/>
            <person name="Cogoni C."/>
            <person name="Macino G."/>
            <person name="Catcheside D.E.A."/>
            <person name="Li W."/>
            <person name="Pratt R.J."/>
            <person name="Osmani S.A."/>
            <person name="DeSouza C.P.C."/>
            <person name="Glass N.L."/>
            <person name="Orbach M.J."/>
            <person name="Berglund J.A."/>
            <person name="Voelker R."/>
            <person name="Yarden O."/>
            <person name="Plamann M."/>
            <person name="Seiler S."/>
            <person name="Dunlap J.C."/>
            <person name="Radford A."/>
            <person name="Aramayo R."/>
            <person name="Natvig D.O."/>
            <person name="Alex L.A."/>
            <person name="Mannhaupt G."/>
            <person name="Ebbole D.J."/>
            <person name="Freitag M."/>
            <person name="Paulsen I."/>
            <person name="Sachs M.S."/>
            <person name="Lander E.S."/>
            <person name="Nusbaum C."/>
            <person name="Birren B.W."/>
        </authorList>
    </citation>
    <scope>NUCLEOTIDE SEQUENCE [LARGE SCALE GENOMIC DNA]</scope>
    <source>
        <strain>ATCC 24698 / 74-OR23-1A / CBS 708.71 / DSM 1257 / FGSC 987</strain>
    </source>
</reference>
<reference key="4">
    <citation type="journal article" date="1998" name="Proc. Natl. Acad. Sci. U.S.A.">
        <title>An additional role for the F-box motif: gene regulation within the Neurospora crassa sulfur control network.</title>
        <authorList>
            <person name="Kumar A."/>
            <person name="Paietta J.V."/>
        </authorList>
    </citation>
    <scope>FUNCTION</scope>
    <scope>DOMAIN</scope>
    <scope>MUTAGENESIS OF LEU-122; ILE-127; LEU-130; GLU-133; VAL-138; LEU-142; ASP-143; LEU-147; VAL-153; TRP-157 AND TRP-167</scope>
</reference>
<proteinExistence type="evidence at protein level"/>
<name>SCONB_NEUCR</name>
<keyword id="KW-1185">Reference proteome</keyword>
<keyword id="KW-0677">Repeat</keyword>
<keyword id="KW-0804">Transcription</keyword>
<keyword id="KW-0805">Transcription regulation</keyword>
<keyword id="KW-0833">Ubl conjugation pathway</keyword>
<keyword id="KW-0853">WD repeat</keyword>
<feature type="chain" id="PRO_0000051209" description="Probable E3 ubiquitin ligase complex SCF subunit scon-2">
    <location>
        <begin position="1"/>
        <end position="650"/>
    </location>
</feature>
<feature type="domain" description="F-box" evidence="2">
    <location>
        <begin position="124"/>
        <end position="170"/>
    </location>
</feature>
<feature type="repeat" description="WD 1">
    <location>
        <begin position="292"/>
        <end position="320"/>
    </location>
</feature>
<feature type="repeat" description="WD 2">
    <location>
        <begin position="332"/>
        <end position="360"/>
    </location>
</feature>
<feature type="repeat" description="WD 3">
    <location>
        <begin position="372"/>
        <end position="400"/>
    </location>
</feature>
<feature type="repeat" description="WD 4">
    <location>
        <begin position="411"/>
        <end position="441"/>
    </location>
</feature>
<feature type="repeat" description="WD 5">
    <location>
        <begin position="453"/>
        <end position="488"/>
    </location>
</feature>
<feature type="repeat" description="WD 6">
    <location>
        <begin position="528"/>
        <end position="564"/>
    </location>
</feature>
<feature type="repeat" description="WD 7">
    <location>
        <begin position="576"/>
        <end position="604"/>
    </location>
</feature>
<feature type="repeat" description="WD 8">
    <location>
        <begin position="616"/>
        <end position="644"/>
    </location>
</feature>
<feature type="region of interest" description="Disordered" evidence="3">
    <location>
        <begin position="200"/>
        <end position="244"/>
    </location>
</feature>
<feature type="region of interest" description="Disordered" evidence="3">
    <location>
        <begin position="482"/>
        <end position="525"/>
    </location>
</feature>
<feature type="compositionally biased region" description="Basic and acidic residues" evidence="3">
    <location>
        <begin position="214"/>
        <end position="223"/>
    </location>
</feature>
<feature type="compositionally biased region" description="Low complexity" evidence="3">
    <location>
        <begin position="487"/>
        <end position="499"/>
    </location>
</feature>
<feature type="compositionally biased region" description="Low complexity" evidence="3">
    <location>
        <begin position="507"/>
        <end position="525"/>
    </location>
</feature>
<feature type="mutagenesis site" description="Leads to constitutive sulfur system repression." evidence="5">
    <original>L</original>
    <variation>D</variation>
    <location>
        <position position="122"/>
    </location>
</feature>
<feature type="mutagenesis site" description="Leads to constitutive sulfur system repression." evidence="5">
    <original>I</original>
    <variation>D</variation>
    <location>
        <position position="127"/>
    </location>
</feature>
<feature type="mutagenesis site" description="Leads to constitutive sulfur system repression." evidence="5">
    <original>L</original>
    <variation>D</variation>
    <location>
        <position position="130"/>
    </location>
</feature>
<feature type="mutagenesis site" description="Leads to constitutive sulfur system repression." evidence="5">
    <original>E</original>
    <variation>A</variation>
    <location>
        <position position="133"/>
    </location>
</feature>
<feature type="mutagenesis site" description="Leads to constitutive sulfur system repression." evidence="5">
    <original>V</original>
    <variation>D</variation>
    <location>
        <position position="138"/>
    </location>
</feature>
<feature type="mutagenesis site" description="Leads to constitutive sulfur system repression." evidence="5">
    <original>L</original>
    <variation>D</variation>
    <location>
        <position position="142"/>
    </location>
</feature>
<feature type="mutagenesis site" description="Leads to constitutive sulfur system repression." evidence="5">
    <original>D</original>
    <variation>I</variation>
    <location>
        <position position="143"/>
    </location>
</feature>
<feature type="mutagenesis site" description="Leads to constitutive sulfur system repression." evidence="5">
    <original>L</original>
    <variation>E</variation>
    <location>
        <position position="147"/>
    </location>
</feature>
<feature type="mutagenesis site" description="Leads to constitutive sulfur system repression." evidence="5">
    <original>V</original>
    <variation>D</variation>
    <location>
        <position position="153"/>
    </location>
</feature>
<feature type="mutagenesis site" description="Leads to constitutive sulfur system repression." evidence="5">
    <original>W</original>
    <variation>G</variation>
    <location>
        <position position="157"/>
    </location>
</feature>
<feature type="mutagenesis site" description="Leads to constitutive sulfur system repression." evidence="5">
    <original>W</original>
    <variation>G</variation>
    <location>
        <position position="167"/>
    </location>
</feature>
<organism>
    <name type="scientific">Neurospora crassa (strain ATCC 24698 / 74-OR23-1A / CBS 708.71 / DSM 1257 / FGSC 987)</name>
    <dbReference type="NCBI Taxonomy" id="367110"/>
    <lineage>
        <taxon>Eukaryota</taxon>
        <taxon>Fungi</taxon>
        <taxon>Dikarya</taxon>
        <taxon>Ascomycota</taxon>
        <taxon>Pezizomycotina</taxon>
        <taxon>Sordariomycetes</taxon>
        <taxon>Sordariomycetidae</taxon>
        <taxon>Sordariales</taxon>
        <taxon>Sordariaceae</taxon>
        <taxon>Neurospora</taxon>
    </lineage>
</organism>
<gene>
    <name type="primary">scon-2</name>
    <name type="ORF">B13M15.090</name>
    <name type="ORF">NCU08563</name>
</gene>
<dbReference type="EMBL" id="U17251">
    <property type="protein sequence ID" value="AAA68968.1"/>
    <property type="molecule type" value="Genomic_DNA"/>
</dbReference>
<dbReference type="EMBL" id="BX897673">
    <property type="protein sequence ID" value="CAE85499.1"/>
    <property type="molecule type" value="Genomic_DNA"/>
</dbReference>
<dbReference type="EMBL" id="CM002238">
    <property type="protein sequence ID" value="EAA33589.2"/>
    <property type="status" value="ALT_INIT"/>
    <property type="molecule type" value="Genomic_DNA"/>
</dbReference>
<dbReference type="PIR" id="T46660">
    <property type="entry name" value="T46660"/>
</dbReference>
<dbReference type="RefSeq" id="XP_962825.2">
    <property type="nucleotide sequence ID" value="XM_957732.2"/>
</dbReference>
<dbReference type="SMR" id="Q01277"/>
<dbReference type="FunCoup" id="Q01277">
    <property type="interactions" value="143"/>
</dbReference>
<dbReference type="STRING" id="367110.Q01277"/>
<dbReference type="PaxDb" id="5141-EFNCRP00000004632"/>
<dbReference type="EnsemblFungi" id="EAA33589">
    <property type="protein sequence ID" value="EAA33589"/>
    <property type="gene ID" value="NCU08563"/>
</dbReference>
<dbReference type="GeneID" id="3878980"/>
<dbReference type="KEGG" id="ncr:NCU08563"/>
<dbReference type="HOGENOM" id="CLU_000288_103_1_1"/>
<dbReference type="InParanoid" id="Q01277"/>
<dbReference type="OMA" id="GIAHVWS"/>
<dbReference type="OrthoDB" id="5580488at2759"/>
<dbReference type="UniPathway" id="UPA00143"/>
<dbReference type="Proteomes" id="UP000001805">
    <property type="component" value="Chromosome 3, Linkage Group III"/>
</dbReference>
<dbReference type="GO" id="GO:0043224">
    <property type="term" value="C:nuclear SCF ubiquitin ligase complex"/>
    <property type="evidence" value="ECO:0000318"/>
    <property type="project" value="GO_Central"/>
</dbReference>
<dbReference type="GO" id="GO:0005634">
    <property type="term" value="C:nucleus"/>
    <property type="evidence" value="ECO:0000318"/>
    <property type="project" value="GO_Central"/>
</dbReference>
<dbReference type="GO" id="GO:0043130">
    <property type="term" value="F:ubiquitin binding"/>
    <property type="evidence" value="ECO:0000318"/>
    <property type="project" value="GO_Central"/>
</dbReference>
<dbReference type="GO" id="GO:0000209">
    <property type="term" value="P:protein polyubiquitination"/>
    <property type="evidence" value="ECO:0000318"/>
    <property type="project" value="GO_Central"/>
</dbReference>
<dbReference type="CDD" id="cd22147">
    <property type="entry name" value="F-box_SpPof1-like"/>
    <property type="match status" value="1"/>
</dbReference>
<dbReference type="CDD" id="cd00200">
    <property type="entry name" value="WD40"/>
    <property type="match status" value="1"/>
</dbReference>
<dbReference type="FunFam" id="1.20.1280.50:FF:000016">
    <property type="entry name" value="E3 ubiquitin ligase complex SCF subunit sconB"/>
    <property type="match status" value="1"/>
</dbReference>
<dbReference type="FunFam" id="2.130.10.10:FF:000770">
    <property type="entry name" value="E3 ubiquitin ligase complex SCF subunit sconB"/>
    <property type="match status" value="1"/>
</dbReference>
<dbReference type="Gene3D" id="1.20.1280.50">
    <property type="match status" value="1"/>
</dbReference>
<dbReference type="Gene3D" id="2.130.10.10">
    <property type="entry name" value="YVTN repeat-like/Quinoprotein amine dehydrogenase"/>
    <property type="match status" value="3"/>
</dbReference>
<dbReference type="InterPro" id="IPR036047">
    <property type="entry name" value="F-box-like_dom_sf"/>
</dbReference>
<dbReference type="InterPro" id="IPR001810">
    <property type="entry name" value="F-box_dom"/>
</dbReference>
<dbReference type="InterPro" id="IPR020472">
    <property type="entry name" value="G-protein_beta_WD-40_rep"/>
</dbReference>
<dbReference type="InterPro" id="IPR011047">
    <property type="entry name" value="Quinoprotein_ADH-like_sf"/>
</dbReference>
<dbReference type="InterPro" id="IPR051075">
    <property type="entry name" value="SCF_subunit_WD-repeat"/>
</dbReference>
<dbReference type="InterPro" id="IPR015943">
    <property type="entry name" value="WD40/YVTN_repeat-like_dom_sf"/>
</dbReference>
<dbReference type="InterPro" id="IPR019775">
    <property type="entry name" value="WD40_repeat_CS"/>
</dbReference>
<dbReference type="InterPro" id="IPR001680">
    <property type="entry name" value="WD40_rpt"/>
</dbReference>
<dbReference type="PANTHER" id="PTHR19872">
    <property type="entry name" value="UBIQUITIN LIGASE SPECIFICITY FACTOR/HREP PROTEIN"/>
    <property type="match status" value="1"/>
</dbReference>
<dbReference type="PANTHER" id="PTHR19872:SF9">
    <property type="entry name" value="UBIQUITIN-BINDING SDF UBIQUITIN LIGASE COMPLEX SUBUNIT"/>
    <property type="match status" value="1"/>
</dbReference>
<dbReference type="Pfam" id="PF12937">
    <property type="entry name" value="F-box-like"/>
    <property type="match status" value="1"/>
</dbReference>
<dbReference type="Pfam" id="PF00400">
    <property type="entry name" value="WD40"/>
    <property type="match status" value="6"/>
</dbReference>
<dbReference type="PRINTS" id="PR00320">
    <property type="entry name" value="GPROTEINBRPT"/>
</dbReference>
<dbReference type="SMART" id="SM00256">
    <property type="entry name" value="FBOX"/>
    <property type="match status" value="1"/>
</dbReference>
<dbReference type="SMART" id="SM00320">
    <property type="entry name" value="WD40"/>
    <property type="match status" value="7"/>
</dbReference>
<dbReference type="SUPFAM" id="SSF81383">
    <property type="entry name" value="F-box domain"/>
    <property type="match status" value="1"/>
</dbReference>
<dbReference type="SUPFAM" id="SSF50998">
    <property type="entry name" value="Quinoprotein alcohol dehydrogenase-like"/>
    <property type="match status" value="1"/>
</dbReference>
<dbReference type="PROSITE" id="PS50181">
    <property type="entry name" value="FBOX"/>
    <property type="match status" value="1"/>
</dbReference>
<dbReference type="PROSITE" id="PS00678">
    <property type="entry name" value="WD_REPEATS_1"/>
    <property type="match status" value="2"/>
</dbReference>
<dbReference type="PROSITE" id="PS50082">
    <property type="entry name" value="WD_REPEATS_2"/>
    <property type="match status" value="6"/>
</dbReference>
<dbReference type="PROSITE" id="PS50294">
    <property type="entry name" value="WD_REPEATS_REGION"/>
    <property type="match status" value="1"/>
</dbReference>
<evidence type="ECO:0000250" key="1"/>
<evidence type="ECO:0000255" key="2">
    <source>
        <dbReference type="PROSITE-ProRule" id="PRU00080"/>
    </source>
</evidence>
<evidence type="ECO:0000256" key="3">
    <source>
        <dbReference type="SAM" id="MobiDB-lite"/>
    </source>
</evidence>
<evidence type="ECO:0000269" key="4">
    <source>
    </source>
</evidence>
<evidence type="ECO:0000269" key="5">
    <source>
    </source>
</evidence>
<evidence type="ECO:0000305" key="6"/>
<accession>Q01277</accession>
<accession>Q7RVH3</accession>